<reference key="1">
    <citation type="journal article" date="2001" name="Plant Mol. Biol.">
        <title>NIMIN-1, NIMIN-2 and NIMIN-3, members of a novel family of proteins from Arabidopsis that interact with NPR1/NIM1, a key regulator of systemic acquired resistance in plants.</title>
        <authorList>
            <person name="Weigel R.R."/>
            <person name="Baeuscher C."/>
            <person name="Pfitzner A.J.P."/>
            <person name="Pfitzner U.M."/>
        </authorList>
    </citation>
    <scope>NUCLEOTIDE SEQUENCE [MRNA]</scope>
    <scope>INTERACTION WITH NPR1</scope>
    <scope>INDUCTION</scope>
    <scope>SUBCELLULAR LOCATION</scope>
    <source>
        <strain>cv. Columbia</strain>
    </source>
</reference>
<reference key="2">
    <citation type="journal article" date="2000" name="Nature">
        <title>Sequence and analysis of chromosome 1 of the plant Arabidopsis thaliana.</title>
        <authorList>
            <person name="Theologis A."/>
            <person name="Ecker J.R."/>
            <person name="Palm C.J."/>
            <person name="Federspiel N.A."/>
            <person name="Kaul S."/>
            <person name="White O."/>
            <person name="Alonso J."/>
            <person name="Altafi H."/>
            <person name="Araujo R."/>
            <person name="Bowman C.L."/>
            <person name="Brooks S.Y."/>
            <person name="Buehler E."/>
            <person name="Chan A."/>
            <person name="Chao Q."/>
            <person name="Chen H."/>
            <person name="Cheuk R.F."/>
            <person name="Chin C.W."/>
            <person name="Chung M.K."/>
            <person name="Conn L."/>
            <person name="Conway A.B."/>
            <person name="Conway A.R."/>
            <person name="Creasy T.H."/>
            <person name="Dewar K."/>
            <person name="Dunn P."/>
            <person name="Etgu P."/>
            <person name="Feldblyum T.V."/>
            <person name="Feng J.-D."/>
            <person name="Fong B."/>
            <person name="Fujii C.Y."/>
            <person name="Gill J.E."/>
            <person name="Goldsmith A.D."/>
            <person name="Haas B."/>
            <person name="Hansen N.F."/>
            <person name="Hughes B."/>
            <person name="Huizar L."/>
            <person name="Hunter J.L."/>
            <person name="Jenkins J."/>
            <person name="Johnson-Hopson C."/>
            <person name="Khan S."/>
            <person name="Khaykin E."/>
            <person name="Kim C.J."/>
            <person name="Koo H.L."/>
            <person name="Kremenetskaia I."/>
            <person name="Kurtz D.B."/>
            <person name="Kwan A."/>
            <person name="Lam B."/>
            <person name="Langin-Hooper S."/>
            <person name="Lee A."/>
            <person name="Lee J.M."/>
            <person name="Lenz C.A."/>
            <person name="Li J.H."/>
            <person name="Li Y.-P."/>
            <person name="Lin X."/>
            <person name="Liu S.X."/>
            <person name="Liu Z.A."/>
            <person name="Luros J.S."/>
            <person name="Maiti R."/>
            <person name="Marziali A."/>
            <person name="Militscher J."/>
            <person name="Miranda M."/>
            <person name="Nguyen M."/>
            <person name="Nierman W.C."/>
            <person name="Osborne B.I."/>
            <person name="Pai G."/>
            <person name="Peterson J."/>
            <person name="Pham P.K."/>
            <person name="Rizzo M."/>
            <person name="Rooney T."/>
            <person name="Rowley D."/>
            <person name="Sakano H."/>
            <person name="Salzberg S.L."/>
            <person name="Schwartz J.R."/>
            <person name="Shinn P."/>
            <person name="Southwick A.M."/>
            <person name="Sun H."/>
            <person name="Tallon L.J."/>
            <person name="Tambunga G."/>
            <person name="Toriumi M.J."/>
            <person name="Town C.D."/>
            <person name="Utterback T."/>
            <person name="Van Aken S."/>
            <person name="Vaysberg M."/>
            <person name="Vysotskaia V.S."/>
            <person name="Walker M."/>
            <person name="Wu D."/>
            <person name="Yu G."/>
            <person name="Fraser C.M."/>
            <person name="Venter J.C."/>
            <person name="Davis R.W."/>
        </authorList>
    </citation>
    <scope>NUCLEOTIDE SEQUENCE [LARGE SCALE GENOMIC DNA]</scope>
    <source>
        <strain>cv. Columbia</strain>
    </source>
</reference>
<reference key="3">
    <citation type="journal article" date="2017" name="Plant J.">
        <title>Araport11: a complete reannotation of the Arabidopsis thaliana reference genome.</title>
        <authorList>
            <person name="Cheng C.Y."/>
            <person name="Krishnakumar V."/>
            <person name="Chan A.P."/>
            <person name="Thibaud-Nissen F."/>
            <person name="Schobel S."/>
            <person name="Town C.D."/>
        </authorList>
    </citation>
    <scope>GENOME REANNOTATION</scope>
    <source>
        <strain>cv. Columbia</strain>
    </source>
</reference>
<reference key="4">
    <citation type="journal article" date="2002" name="Science">
        <title>Functional annotation of a full-length Arabidopsis cDNA collection.</title>
        <authorList>
            <person name="Seki M."/>
            <person name="Narusaka M."/>
            <person name="Kamiya A."/>
            <person name="Ishida J."/>
            <person name="Satou M."/>
            <person name="Sakurai T."/>
            <person name="Nakajima M."/>
            <person name="Enju A."/>
            <person name="Akiyama K."/>
            <person name="Oono Y."/>
            <person name="Muramatsu M."/>
            <person name="Hayashizaki Y."/>
            <person name="Kawai J."/>
            <person name="Carninci P."/>
            <person name="Itoh M."/>
            <person name="Ishii Y."/>
            <person name="Arakawa T."/>
            <person name="Shibata K."/>
            <person name="Shinagawa A."/>
            <person name="Shinozaki K."/>
        </authorList>
    </citation>
    <scope>NUCLEOTIDE SEQUENCE [LARGE SCALE MRNA]</scope>
    <source>
        <strain>cv. Columbia</strain>
    </source>
</reference>
<reference key="5">
    <citation type="journal article" date="2003" name="Science">
        <title>Empirical analysis of transcriptional activity in the Arabidopsis genome.</title>
        <authorList>
            <person name="Yamada K."/>
            <person name="Lim J."/>
            <person name="Dale J.M."/>
            <person name="Chen H."/>
            <person name="Shinn P."/>
            <person name="Palm C.J."/>
            <person name="Southwick A.M."/>
            <person name="Wu H.C."/>
            <person name="Kim C.J."/>
            <person name="Nguyen M."/>
            <person name="Pham P.K."/>
            <person name="Cheuk R.F."/>
            <person name="Karlin-Newmann G."/>
            <person name="Liu S.X."/>
            <person name="Lam B."/>
            <person name="Sakano H."/>
            <person name="Wu T."/>
            <person name="Yu G."/>
            <person name="Miranda M."/>
            <person name="Quach H.L."/>
            <person name="Tripp M."/>
            <person name="Chang C.H."/>
            <person name="Lee J.M."/>
            <person name="Toriumi M.J."/>
            <person name="Chan M.M."/>
            <person name="Tang C.C."/>
            <person name="Onodera C.S."/>
            <person name="Deng J.M."/>
            <person name="Akiyama K."/>
            <person name="Ansari Y."/>
            <person name="Arakawa T."/>
            <person name="Banh J."/>
            <person name="Banno F."/>
            <person name="Bowser L."/>
            <person name="Brooks S.Y."/>
            <person name="Carninci P."/>
            <person name="Chao Q."/>
            <person name="Choy N."/>
            <person name="Enju A."/>
            <person name="Goldsmith A.D."/>
            <person name="Gurjal M."/>
            <person name="Hansen N.F."/>
            <person name="Hayashizaki Y."/>
            <person name="Johnson-Hopson C."/>
            <person name="Hsuan V.W."/>
            <person name="Iida K."/>
            <person name="Karnes M."/>
            <person name="Khan S."/>
            <person name="Koesema E."/>
            <person name="Ishida J."/>
            <person name="Jiang P.X."/>
            <person name="Jones T."/>
            <person name="Kawai J."/>
            <person name="Kamiya A."/>
            <person name="Meyers C."/>
            <person name="Nakajima M."/>
            <person name="Narusaka M."/>
            <person name="Seki M."/>
            <person name="Sakurai T."/>
            <person name="Satou M."/>
            <person name="Tamse R."/>
            <person name="Vaysberg M."/>
            <person name="Wallender E.K."/>
            <person name="Wong C."/>
            <person name="Yamamura Y."/>
            <person name="Yuan S."/>
            <person name="Shinozaki K."/>
            <person name="Davis R.W."/>
            <person name="Theologis A."/>
            <person name="Ecker J.R."/>
        </authorList>
    </citation>
    <scope>NUCLEOTIDE SEQUENCE [LARGE SCALE MRNA]</scope>
    <source>
        <strain>cv. Columbia</strain>
    </source>
</reference>
<reference key="6">
    <citation type="journal article" date="2015" name="Cell Host Microbe">
        <title>Posttranslational modifications of the master transcriptional regulator NPR1 enable dynamic but tight control of plant immune responses.</title>
        <authorList>
            <person name="Saleh A."/>
            <person name="Withers J."/>
            <person name="Mohan R."/>
            <person name="Marques J."/>
            <person name="Gu Y."/>
            <person name="Yan S."/>
            <person name="Zavaliev R."/>
            <person name="Nomoto M."/>
            <person name="Tada Y."/>
            <person name="Dong X."/>
        </authorList>
    </citation>
    <scope>INTERACTION WITH NPR1</scope>
    <source>
        <strain>cv. Columbia</strain>
    </source>
</reference>
<evidence type="ECO:0000255" key="1"/>
<evidence type="ECO:0000256" key="2">
    <source>
        <dbReference type="SAM" id="MobiDB-lite"/>
    </source>
</evidence>
<evidence type="ECO:0000269" key="3">
    <source>
    </source>
</evidence>
<evidence type="ECO:0000269" key="4">
    <source>
    </source>
</evidence>
<evidence type="ECO:0000303" key="5">
    <source>
    </source>
</evidence>
<evidence type="ECO:0000305" key="6"/>
<evidence type="ECO:0000312" key="7">
    <source>
        <dbReference type="Araport" id="AT1G02450"/>
    </source>
</evidence>
<evidence type="ECO:0000312" key="8">
    <source>
        <dbReference type="EMBL" id="AAG10641.1"/>
    </source>
</evidence>
<evidence type="ECO:0000312" key="9">
    <source>
        <dbReference type="EMBL" id="AC064879"/>
    </source>
</evidence>
<proteinExistence type="evidence at protein level"/>
<keyword id="KW-0175">Coiled coil</keyword>
<keyword id="KW-0539">Nucleus</keyword>
<keyword id="KW-1185">Reference proteome</keyword>
<accession>Q9FNZ5</accession>
<accession>Q9FWX4</accession>
<feature type="chain" id="PRO_0000407996" description="Protein NIM1-INTERACTING 1">
    <location>
        <begin position="1"/>
        <end position="142"/>
    </location>
</feature>
<feature type="region of interest" description="Involved in NPR1/NIM1 interaction">
    <location>
        <begin position="47"/>
        <end position="53"/>
    </location>
</feature>
<feature type="region of interest" description="Disordered" evidence="2">
    <location>
        <begin position="63"/>
        <end position="86"/>
    </location>
</feature>
<feature type="region of interest" description="Disordered" evidence="2">
    <location>
        <begin position="108"/>
        <end position="142"/>
    </location>
</feature>
<feature type="coiled-coil region" evidence="1">
    <location>
        <begin position="110"/>
        <end position="141"/>
    </location>
</feature>
<feature type="short sequence motif" description="Nuclear localization signal" evidence="1">
    <location>
        <begin position="60"/>
        <end position="64"/>
    </location>
</feature>
<feature type="compositionally biased region" description="Basic and acidic residues" evidence="2">
    <location>
        <begin position="111"/>
        <end position="121"/>
    </location>
</feature>
<dbReference type="EMBL" id="AJ250184">
    <property type="protein sequence ID" value="CAC19844.1"/>
    <property type="molecule type" value="mRNA"/>
</dbReference>
<dbReference type="EMBL" id="AC022521">
    <property type="protein sequence ID" value="AAG10641.1"/>
    <property type="status" value="ALT_INIT"/>
    <property type="molecule type" value="Genomic_DNA"/>
</dbReference>
<dbReference type="EMBL" id="AC064879">
    <property type="status" value="NOT_ANNOTATED_CDS"/>
    <property type="molecule type" value="Genomic_DNA"/>
</dbReference>
<dbReference type="EMBL" id="CP002684">
    <property type="protein sequence ID" value="AEE27431.1"/>
    <property type="molecule type" value="Genomic_DNA"/>
</dbReference>
<dbReference type="EMBL" id="AK119149">
    <property type="protein sequence ID" value="BAC43719.1"/>
    <property type="molecule type" value="mRNA"/>
</dbReference>
<dbReference type="EMBL" id="BT003662">
    <property type="protein sequence ID" value="AAO39890.1"/>
    <property type="molecule type" value="mRNA"/>
</dbReference>
<dbReference type="PIR" id="A86155">
    <property type="entry name" value="A86155"/>
</dbReference>
<dbReference type="RefSeq" id="NP_563653.2">
    <property type="nucleotide sequence ID" value="NM_100126.4"/>
</dbReference>
<dbReference type="SMR" id="Q9FNZ5"/>
<dbReference type="BioGRID" id="23040">
    <property type="interactions" value="8"/>
</dbReference>
<dbReference type="FunCoup" id="Q9FNZ5">
    <property type="interactions" value="4"/>
</dbReference>
<dbReference type="IntAct" id="Q9FNZ5">
    <property type="interactions" value="11"/>
</dbReference>
<dbReference type="STRING" id="3702.Q9FNZ5"/>
<dbReference type="PaxDb" id="3702-AT1G02450.1"/>
<dbReference type="ProteomicsDB" id="251298"/>
<dbReference type="EnsemblPlants" id="AT1G02450.1">
    <property type="protein sequence ID" value="AT1G02450.1"/>
    <property type="gene ID" value="AT1G02450"/>
</dbReference>
<dbReference type="GeneID" id="837800"/>
<dbReference type="Gramene" id="AT1G02450.1">
    <property type="protein sequence ID" value="AT1G02450.1"/>
    <property type="gene ID" value="AT1G02450"/>
</dbReference>
<dbReference type="KEGG" id="ath:AT1G02450"/>
<dbReference type="Araport" id="AT1G02450"/>
<dbReference type="TAIR" id="AT1G02450">
    <property type="gene designation" value="NIMIN1"/>
</dbReference>
<dbReference type="eggNOG" id="ENOG502R1UH">
    <property type="taxonomic scope" value="Eukaryota"/>
</dbReference>
<dbReference type="HOGENOM" id="CLU_1837849_0_0_1"/>
<dbReference type="InParanoid" id="Q9FNZ5"/>
<dbReference type="OMA" id="RWEDFTH"/>
<dbReference type="PRO" id="PR:Q9FNZ5"/>
<dbReference type="Proteomes" id="UP000006548">
    <property type="component" value="Chromosome 1"/>
</dbReference>
<dbReference type="ExpressionAtlas" id="Q9FNZ5">
    <property type="expression patterns" value="baseline and differential"/>
</dbReference>
<dbReference type="GO" id="GO:0005634">
    <property type="term" value="C:nucleus"/>
    <property type="evidence" value="ECO:0007005"/>
    <property type="project" value="TAIR"/>
</dbReference>
<dbReference type="GO" id="GO:0042742">
    <property type="term" value="P:defense response to bacterium"/>
    <property type="evidence" value="ECO:0000315"/>
    <property type="project" value="TAIR"/>
</dbReference>
<dbReference type="GO" id="GO:0045892">
    <property type="term" value="P:negative regulation of DNA-templated transcription"/>
    <property type="evidence" value="ECO:0000315"/>
    <property type="project" value="TAIR"/>
</dbReference>
<dbReference type="GO" id="GO:0010112">
    <property type="term" value="P:regulation of systemic acquired resistance"/>
    <property type="evidence" value="ECO:0000315"/>
    <property type="project" value="TAIR"/>
</dbReference>
<dbReference type="InterPro" id="IPR031425">
    <property type="entry name" value="NPR1/NH1-interacting"/>
</dbReference>
<dbReference type="PANTHER" id="PTHR33669">
    <property type="entry name" value="PROTEIN NEGATIVE REGULATOR OF RESISTANCE"/>
    <property type="match status" value="1"/>
</dbReference>
<dbReference type="PANTHER" id="PTHR33669:SF1">
    <property type="entry name" value="PROTEIN NIM1-INTERACTING 1"/>
    <property type="match status" value="1"/>
</dbReference>
<dbReference type="Pfam" id="PF15699">
    <property type="entry name" value="NPR1_interact"/>
    <property type="match status" value="1"/>
</dbReference>
<sequence>MYPKQFSLYNYSLETMSKDENVESKETIRVDKRVREDEEEEEEKKIDTFFKLIKHYQEARKRRREELAENSGVVRRKSNGGERSGIVVPAFQPEDFSQCRTGLKPPLMFVSDHKEENTKVEQEEDQTEERNEDKALDLNLAL</sequence>
<protein>
    <recommendedName>
        <fullName evidence="5">Protein NIM1-INTERACTING 1</fullName>
        <shortName evidence="5">Protein NIMIN-1</shortName>
    </recommendedName>
</protein>
<gene>
    <name evidence="5" type="primary">NIMIN-1</name>
    <name evidence="7" type="ordered locus">At1g02450</name>
    <name evidence="8" type="ORF">T14P4.19</name>
    <name evidence="9" type="ORF">T6A9_28</name>
</gene>
<name>NIMI1_ARATH</name>
<comment type="subunit">
    <text evidence="3 4">Interacts with NPR1 C-terminal region.</text>
</comment>
<comment type="interaction">
    <interactant intactId="EBI-541099">
        <id>Q9FNZ5</id>
    </interactant>
    <interactant intactId="EBI-15195391">
        <id>B2GVM8</id>
        <label>At1g24230</label>
    </interactant>
    <organismsDiffer>false</organismsDiffer>
    <experiments>3</experiments>
</comment>
<comment type="interaction">
    <interactant intactId="EBI-541099">
        <id>Q9FNZ5</id>
    </interactant>
    <interactant intactId="EBI-25511288">
        <id>A0A178VXH5</id>
        <label>AXX17_At2g40690</label>
    </interactant>
    <organismsDiffer>false</organismsDiffer>
    <experiments>3</experiments>
</comment>
<comment type="interaction">
    <interactant intactId="EBI-541099">
        <id>Q9FNZ5</id>
    </interactant>
    <interactant intactId="EBI-533348">
        <id>Q9FN69</id>
        <label>GL3</label>
    </interactant>
    <organismsDiffer>false</organismsDiffer>
    <experiments>3</experiments>
</comment>
<comment type="interaction">
    <interactant intactId="EBI-541099">
        <id>Q9FNZ5</id>
    </interactant>
    <interactant intactId="EBI-1392127">
        <id>P93002</id>
        <label>NPR1</label>
    </interactant>
    <organismsDiffer>false</organismsDiffer>
    <experiments>4</experiments>
</comment>
<comment type="interaction">
    <interactant intactId="EBI-541099">
        <id>Q9FNZ5</id>
    </interactant>
    <interactant intactId="EBI-541093">
        <id>Q8L9W4</id>
        <label>NPR1</label>
    </interactant>
    <organismsDiffer>false</organismsDiffer>
    <experiments>5</experiments>
</comment>
<comment type="interaction">
    <interactant intactId="EBI-541099">
        <id>Q9FNZ5</id>
    </interactant>
    <interactant intactId="EBI-4441365">
        <id>Q8L746</id>
        <label>NPR3</label>
    </interactant>
    <organismsDiffer>false</organismsDiffer>
    <experiments>4</experiments>
</comment>
<comment type="interaction">
    <interactant intactId="EBI-541099">
        <id>Q9FNZ5</id>
    </interactant>
    <interactant intactId="EBI-4426144">
        <id>Q9C9L2</id>
        <label>TCP15</label>
    </interactant>
    <organismsDiffer>false</organismsDiffer>
    <experiments>3</experiments>
</comment>
<comment type="interaction">
    <interactant intactId="EBI-541099">
        <id>Q9FNZ5</id>
    </interactant>
    <interactant intactId="EBI-25522447">
        <id>Q9MAH8</id>
        <label>TCP3</label>
    </interactant>
    <organismsDiffer>false</organismsDiffer>
    <experiments>3</experiments>
</comment>
<comment type="subcellular location">
    <subcellularLocation>
        <location evidence="3">Nucleus</location>
    </subcellularLocation>
</comment>
<comment type="induction">
    <text evidence="3">By salicylic acid (SA) and BTH.</text>
</comment>
<comment type="similarity">
    <text>Belongs to the NPR1-interactor family.</text>
</comment>
<comment type="sequence caution" evidence="6">
    <conflict type="erroneous initiation">
        <sequence resource="EMBL-CDS" id="AAG10641"/>
    </conflict>
    <text>Truncated N-terminus.</text>
</comment>
<organism>
    <name type="scientific">Arabidopsis thaliana</name>
    <name type="common">Mouse-ear cress</name>
    <dbReference type="NCBI Taxonomy" id="3702"/>
    <lineage>
        <taxon>Eukaryota</taxon>
        <taxon>Viridiplantae</taxon>
        <taxon>Streptophyta</taxon>
        <taxon>Embryophyta</taxon>
        <taxon>Tracheophyta</taxon>
        <taxon>Spermatophyta</taxon>
        <taxon>Magnoliopsida</taxon>
        <taxon>eudicotyledons</taxon>
        <taxon>Gunneridae</taxon>
        <taxon>Pentapetalae</taxon>
        <taxon>rosids</taxon>
        <taxon>malvids</taxon>
        <taxon>Brassicales</taxon>
        <taxon>Brassicaceae</taxon>
        <taxon>Camelineae</taxon>
        <taxon>Arabidopsis</taxon>
    </lineage>
</organism>